<organism>
    <name type="scientific">Staphylococcus aureus (strain N315)</name>
    <dbReference type="NCBI Taxonomy" id="158879"/>
    <lineage>
        <taxon>Bacteria</taxon>
        <taxon>Bacillati</taxon>
        <taxon>Bacillota</taxon>
        <taxon>Bacilli</taxon>
        <taxon>Bacillales</taxon>
        <taxon>Staphylococcaceae</taxon>
        <taxon>Staphylococcus</taxon>
    </lineage>
</organism>
<reference key="1">
    <citation type="journal article" date="2001" name="Lancet">
        <title>Whole genome sequencing of meticillin-resistant Staphylococcus aureus.</title>
        <authorList>
            <person name="Kuroda M."/>
            <person name="Ohta T."/>
            <person name="Uchiyama I."/>
            <person name="Baba T."/>
            <person name="Yuzawa H."/>
            <person name="Kobayashi I."/>
            <person name="Cui L."/>
            <person name="Oguchi A."/>
            <person name="Aoki K."/>
            <person name="Nagai Y."/>
            <person name="Lian J.-Q."/>
            <person name="Ito T."/>
            <person name="Kanamori M."/>
            <person name="Matsumaru H."/>
            <person name="Maruyama A."/>
            <person name="Murakami H."/>
            <person name="Hosoyama A."/>
            <person name="Mizutani-Ui Y."/>
            <person name="Takahashi N.K."/>
            <person name="Sawano T."/>
            <person name="Inoue R."/>
            <person name="Kaito C."/>
            <person name="Sekimizu K."/>
            <person name="Hirakawa H."/>
            <person name="Kuhara S."/>
            <person name="Goto S."/>
            <person name="Yabuzaki J."/>
            <person name="Kanehisa M."/>
            <person name="Yamashita A."/>
            <person name="Oshima K."/>
            <person name="Furuya K."/>
            <person name="Yoshino C."/>
            <person name="Shiba T."/>
            <person name="Hattori M."/>
            <person name="Ogasawara N."/>
            <person name="Hayashi H."/>
            <person name="Hiramatsu K."/>
        </authorList>
    </citation>
    <scope>NUCLEOTIDE SEQUENCE [LARGE SCALE GENOMIC DNA]</scope>
    <source>
        <strain>N315</strain>
    </source>
</reference>
<reference key="2">
    <citation type="submission" date="2005-11" db="UniProtKB">
        <title>Shotgun proteomic analysis of total protein extract of S. aureus S30 versus N315.</title>
        <authorList>
            <person name="Stenz L."/>
        </authorList>
    </citation>
    <scope>IDENTIFICATION BY MASS SPECTROMETRY</scope>
</reference>
<reference key="3">
    <citation type="submission" date="2007-10" db="UniProtKB">
        <title>Shotgun proteomic analysis of total and membrane protein extracts of S. aureus strain N315.</title>
        <authorList>
            <person name="Vaezzadeh A.R."/>
            <person name="Deshusses J."/>
            <person name="Lescuyer P."/>
            <person name="Hochstrasser D.F."/>
        </authorList>
    </citation>
    <scope>IDENTIFICATION BY MASS SPECTROMETRY [LARGE SCALE ANALYSIS]</scope>
    <source>
        <strain>N315</strain>
    </source>
</reference>
<feature type="chain" id="PRO_0000223377" description="DNA-binding protein HU">
    <location>
        <begin position="1"/>
        <end position="90"/>
    </location>
</feature>
<sequence length="90" mass="9626">MNKTDLINAVAEQADLTKKEAGSAVDAVFESIQNSLAKGEKVQLIGFGNFEVRERAARKGRNPQTGKEIDIPASKVPAFKAGKALKDAVK</sequence>
<accession>Q7A5J1</accession>
<dbReference type="EMBL" id="BA000018">
    <property type="protein sequence ID" value="BAB42566.1"/>
    <property type="molecule type" value="Genomic_DNA"/>
</dbReference>
<dbReference type="PIR" id="A89926">
    <property type="entry name" value="A89926"/>
</dbReference>
<dbReference type="RefSeq" id="WP_001043863.1">
    <property type="nucleotide sequence ID" value="NC_002745.2"/>
</dbReference>
<dbReference type="SMR" id="Q7A5J1"/>
<dbReference type="EnsemblBacteria" id="BAB42566">
    <property type="protein sequence ID" value="BAB42566"/>
    <property type="gene ID" value="BAB42566"/>
</dbReference>
<dbReference type="KEGG" id="sau:SA1305"/>
<dbReference type="HOGENOM" id="CLU_105066_3_2_9"/>
<dbReference type="GO" id="GO:0005829">
    <property type="term" value="C:cytosol"/>
    <property type="evidence" value="ECO:0007669"/>
    <property type="project" value="TreeGrafter"/>
</dbReference>
<dbReference type="GO" id="GO:0003677">
    <property type="term" value="F:DNA binding"/>
    <property type="evidence" value="ECO:0007669"/>
    <property type="project" value="UniProtKB-KW"/>
</dbReference>
<dbReference type="GO" id="GO:0030527">
    <property type="term" value="F:structural constituent of chromatin"/>
    <property type="evidence" value="ECO:0007669"/>
    <property type="project" value="InterPro"/>
</dbReference>
<dbReference type="GO" id="GO:0030261">
    <property type="term" value="P:chromosome condensation"/>
    <property type="evidence" value="ECO:0007669"/>
    <property type="project" value="UniProtKB-KW"/>
</dbReference>
<dbReference type="CDD" id="cd13831">
    <property type="entry name" value="HU"/>
    <property type="match status" value="1"/>
</dbReference>
<dbReference type="FunFam" id="4.10.520.10:FF:000001">
    <property type="entry name" value="DNA-binding protein HU"/>
    <property type="match status" value="1"/>
</dbReference>
<dbReference type="Gene3D" id="4.10.520.10">
    <property type="entry name" value="IHF-like DNA-binding proteins"/>
    <property type="match status" value="1"/>
</dbReference>
<dbReference type="InterPro" id="IPR000119">
    <property type="entry name" value="Hist_DNA-bd"/>
</dbReference>
<dbReference type="InterPro" id="IPR020816">
    <property type="entry name" value="Histone-like_DNA-bd_CS"/>
</dbReference>
<dbReference type="InterPro" id="IPR010992">
    <property type="entry name" value="IHF-like_DNA-bd_dom_sf"/>
</dbReference>
<dbReference type="PANTHER" id="PTHR33175">
    <property type="entry name" value="DNA-BINDING PROTEIN HU"/>
    <property type="match status" value="1"/>
</dbReference>
<dbReference type="PANTHER" id="PTHR33175:SF3">
    <property type="entry name" value="DNA-BINDING PROTEIN HU-BETA"/>
    <property type="match status" value="1"/>
</dbReference>
<dbReference type="Pfam" id="PF00216">
    <property type="entry name" value="Bac_DNA_binding"/>
    <property type="match status" value="1"/>
</dbReference>
<dbReference type="PRINTS" id="PR01727">
    <property type="entry name" value="DNABINDINGHU"/>
</dbReference>
<dbReference type="SMART" id="SM00411">
    <property type="entry name" value="BHL"/>
    <property type="match status" value="1"/>
</dbReference>
<dbReference type="SUPFAM" id="SSF47729">
    <property type="entry name" value="IHF-like DNA-binding proteins"/>
    <property type="match status" value="1"/>
</dbReference>
<dbReference type="PROSITE" id="PS00045">
    <property type="entry name" value="HISTONE_LIKE"/>
    <property type="match status" value="1"/>
</dbReference>
<name>DBH_STAAN</name>
<proteinExistence type="evidence at protein level"/>
<evidence type="ECO:0000250" key="1"/>
<evidence type="ECO:0000305" key="2"/>
<protein>
    <recommendedName>
        <fullName>DNA-binding protein HU</fullName>
    </recommendedName>
</protein>
<keyword id="KW-0226">DNA condensation</keyword>
<keyword id="KW-0238">DNA-binding</keyword>
<comment type="function">
    <text evidence="1">Histone-like DNA-binding protein which is capable of wrapping DNA to stabilize it, and thus to prevent its denaturation under extreme environmental conditions.</text>
</comment>
<comment type="subunit">
    <text evidence="1">Homodimer.</text>
</comment>
<comment type="similarity">
    <text evidence="2">Belongs to the bacterial histone-like protein family.</text>
</comment>
<gene>
    <name type="primary">hup</name>
    <name type="ordered locus">SA1305</name>
</gene>